<reference key="1">
    <citation type="journal article" date="1993" name="Gene">
        <title>Cloning and expression of a mouse cDNA encoding p59, an immunophilin that associates with the glucocorticoid receptor.</title>
        <authorList>
            <person name="Schmitt J."/>
            <person name="Stunnenberg H.G."/>
        </authorList>
    </citation>
    <scope>NUCLEOTIDE SEQUENCE [MRNA]</scope>
</reference>
<reference key="2">
    <citation type="journal article" date="2005" name="Science">
        <title>The transcriptional landscape of the mammalian genome.</title>
        <authorList>
            <person name="Carninci P."/>
            <person name="Kasukawa T."/>
            <person name="Katayama S."/>
            <person name="Gough J."/>
            <person name="Frith M.C."/>
            <person name="Maeda N."/>
            <person name="Oyama R."/>
            <person name="Ravasi T."/>
            <person name="Lenhard B."/>
            <person name="Wells C."/>
            <person name="Kodzius R."/>
            <person name="Shimokawa K."/>
            <person name="Bajic V.B."/>
            <person name="Brenner S.E."/>
            <person name="Batalov S."/>
            <person name="Forrest A.R."/>
            <person name="Zavolan M."/>
            <person name="Davis M.J."/>
            <person name="Wilming L.G."/>
            <person name="Aidinis V."/>
            <person name="Allen J.E."/>
            <person name="Ambesi-Impiombato A."/>
            <person name="Apweiler R."/>
            <person name="Aturaliya R.N."/>
            <person name="Bailey T.L."/>
            <person name="Bansal M."/>
            <person name="Baxter L."/>
            <person name="Beisel K.W."/>
            <person name="Bersano T."/>
            <person name="Bono H."/>
            <person name="Chalk A.M."/>
            <person name="Chiu K.P."/>
            <person name="Choudhary V."/>
            <person name="Christoffels A."/>
            <person name="Clutterbuck D.R."/>
            <person name="Crowe M.L."/>
            <person name="Dalla E."/>
            <person name="Dalrymple B.P."/>
            <person name="de Bono B."/>
            <person name="Della Gatta G."/>
            <person name="di Bernardo D."/>
            <person name="Down T."/>
            <person name="Engstrom P."/>
            <person name="Fagiolini M."/>
            <person name="Faulkner G."/>
            <person name="Fletcher C.F."/>
            <person name="Fukushima T."/>
            <person name="Furuno M."/>
            <person name="Futaki S."/>
            <person name="Gariboldi M."/>
            <person name="Georgii-Hemming P."/>
            <person name="Gingeras T.R."/>
            <person name="Gojobori T."/>
            <person name="Green R.E."/>
            <person name="Gustincich S."/>
            <person name="Harbers M."/>
            <person name="Hayashi Y."/>
            <person name="Hensch T.K."/>
            <person name="Hirokawa N."/>
            <person name="Hill D."/>
            <person name="Huminiecki L."/>
            <person name="Iacono M."/>
            <person name="Ikeo K."/>
            <person name="Iwama A."/>
            <person name="Ishikawa T."/>
            <person name="Jakt M."/>
            <person name="Kanapin A."/>
            <person name="Katoh M."/>
            <person name="Kawasawa Y."/>
            <person name="Kelso J."/>
            <person name="Kitamura H."/>
            <person name="Kitano H."/>
            <person name="Kollias G."/>
            <person name="Krishnan S.P."/>
            <person name="Kruger A."/>
            <person name="Kummerfeld S.K."/>
            <person name="Kurochkin I.V."/>
            <person name="Lareau L.F."/>
            <person name="Lazarevic D."/>
            <person name="Lipovich L."/>
            <person name="Liu J."/>
            <person name="Liuni S."/>
            <person name="McWilliam S."/>
            <person name="Madan Babu M."/>
            <person name="Madera M."/>
            <person name="Marchionni L."/>
            <person name="Matsuda H."/>
            <person name="Matsuzawa S."/>
            <person name="Miki H."/>
            <person name="Mignone F."/>
            <person name="Miyake S."/>
            <person name="Morris K."/>
            <person name="Mottagui-Tabar S."/>
            <person name="Mulder N."/>
            <person name="Nakano N."/>
            <person name="Nakauchi H."/>
            <person name="Ng P."/>
            <person name="Nilsson R."/>
            <person name="Nishiguchi S."/>
            <person name="Nishikawa S."/>
            <person name="Nori F."/>
            <person name="Ohara O."/>
            <person name="Okazaki Y."/>
            <person name="Orlando V."/>
            <person name="Pang K.C."/>
            <person name="Pavan W.J."/>
            <person name="Pavesi G."/>
            <person name="Pesole G."/>
            <person name="Petrovsky N."/>
            <person name="Piazza S."/>
            <person name="Reed J."/>
            <person name="Reid J.F."/>
            <person name="Ring B.Z."/>
            <person name="Ringwald M."/>
            <person name="Rost B."/>
            <person name="Ruan Y."/>
            <person name="Salzberg S.L."/>
            <person name="Sandelin A."/>
            <person name="Schneider C."/>
            <person name="Schoenbach C."/>
            <person name="Sekiguchi K."/>
            <person name="Semple C.A."/>
            <person name="Seno S."/>
            <person name="Sessa L."/>
            <person name="Sheng Y."/>
            <person name="Shibata Y."/>
            <person name="Shimada H."/>
            <person name="Shimada K."/>
            <person name="Silva D."/>
            <person name="Sinclair B."/>
            <person name="Sperling S."/>
            <person name="Stupka E."/>
            <person name="Sugiura K."/>
            <person name="Sultana R."/>
            <person name="Takenaka Y."/>
            <person name="Taki K."/>
            <person name="Tammoja K."/>
            <person name="Tan S.L."/>
            <person name="Tang S."/>
            <person name="Taylor M.S."/>
            <person name="Tegner J."/>
            <person name="Teichmann S.A."/>
            <person name="Ueda H.R."/>
            <person name="van Nimwegen E."/>
            <person name="Verardo R."/>
            <person name="Wei C.L."/>
            <person name="Yagi K."/>
            <person name="Yamanishi H."/>
            <person name="Zabarovsky E."/>
            <person name="Zhu S."/>
            <person name="Zimmer A."/>
            <person name="Hide W."/>
            <person name="Bult C."/>
            <person name="Grimmond S.M."/>
            <person name="Teasdale R.D."/>
            <person name="Liu E.T."/>
            <person name="Brusic V."/>
            <person name="Quackenbush J."/>
            <person name="Wahlestedt C."/>
            <person name="Mattick J.S."/>
            <person name="Hume D.A."/>
            <person name="Kai C."/>
            <person name="Sasaki D."/>
            <person name="Tomaru Y."/>
            <person name="Fukuda S."/>
            <person name="Kanamori-Katayama M."/>
            <person name="Suzuki M."/>
            <person name="Aoki J."/>
            <person name="Arakawa T."/>
            <person name="Iida J."/>
            <person name="Imamura K."/>
            <person name="Itoh M."/>
            <person name="Kato T."/>
            <person name="Kawaji H."/>
            <person name="Kawagashira N."/>
            <person name="Kawashima T."/>
            <person name="Kojima M."/>
            <person name="Kondo S."/>
            <person name="Konno H."/>
            <person name="Nakano K."/>
            <person name="Ninomiya N."/>
            <person name="Nishio T."/>
            <person name="Okada M."/>
            <person name="Plessy C."/>
            <person name="Shibata K."/>
            <person name="Shiraki T."/>
            <person name="Suzuki S."/>
            <person name="Tagami M."/>
            <person name="Waki K."/>
            <person name="Watahiki A."/>
            <person name="Okamura-Oho Y."/>
            <person name="Suzuki H."/>
            <person name="Kawai J."/>
            <person name="Hayashizaki Y."/>
        </authorList>
    </citation>
    <scope>NUCLEOTIDE SEQUENCE [LARGE SCALE MRNA]</scope>
    <source>
        <strain>C57BL/6J</strain>
        <tissue>Embryo</tissue>
        <tissue>Spinal ganglion</tissue>
    </source>
</reference>
<reference key="3">
    <citation type="journal article" date="2004" name="Genome Res.">
        <title>The status, quality, and expansion of the NIH full-length cDNA project: the Mammalian Gene Collection (MGC).</title>
        <authorList>
            <consortium name="The MGC Project Team"/>
        </authorList>
    </citation>
    <scope>NUCLEOTIDE SEQUENCE [LARGE SCALE MRNA]</scope>
    <source>
        <tissue>Lung tumor</tissue>
    </source>
</reference>
<reference key="4">
    <citation type="journal article" date="1993" name="Proc. Natl. Acad. Sci. U.S.A.">
        <title>Overexpression, characterization, and purification of a recombinant mouse immunophilin FKBP-52 and identification of an associated phosphoprotein.</title>
        <authorList>
            <person name="Alnemri E.S."/>
            <person name="Fernandes-Alnemri T."/>
            <person name="Nelki D.S."/>
            <person name="Dudley K."/>
            <person name="Dubois G.C."/>
            <person name="Litwack G."/>
        </authorList>
    </citation>
    <scope>NUCLEOTIDE SEQUENCE [MRNA] OF 6-458</scope>
    <scope>PARTIAL PROTEIN SEQUENCE</scope>
    <scope>FUNCTION</scope>
    <scope>SUBCELLULAR LOCATION</scope>
    <source>
        <strain>C57BL/6J</strain>
        <tissue>Testis</tissue>
    </source>
</reference>
<reference key="5">
    <citation type="journal article" date="1997" name="J. Biol. Chem.">
        <title>Protein phosphatase 5 is a major component of glucocorticoid receptor.hsp90 complexes with properties of an FK506-binding immunophilin.</title>
        <authorList>
            <person name="Silverstein A.M."/>
            <person name="Galigniana M.D."/>
            <person name="Chen M.S."/>
            <person name="Owens-Grillo J.K."/>
            <person name="Chinkers M."/>
            <person name="Pratt W.B."/>
        </authorList>
    </citation>
    <scope>IDENTIFICATION IN A COMPLEX WITH NR3C1 AND HSP90AA1</scope>
</reference>
<reference key="6">
    <citation type="journal article" date="2001" name="J. Biol. Chem.">
        <title>Evidence that the peptidylprolyl isomerase domain of the hsp90-binding immunophilin FKBP52 is involved in both dynein interaction and glucocorticoid receptor movement to the nucleus.</title>
        <authorList>
            <person name="Galigniana M.D."/>
            <person name="Radanyi C."/>
            <person name="Renoir J.-M."/>
            <person name="Housley P.R."/>
            <person name="Pratt W.B."/>
        </authorList>
    </citation>
    <scope>FUNCTION IN INTRACELLULAR TRAFFICKING</scope>
    <scope>IDENTIFICATION IN A COMPLEX WITH HSP90AA1 AND NR3C1</scope>
    <scope>INTERACTION WITH DYNEIN</scope>
</reference>
<reference key="7">
    <citation type="journal article" date="2002" name="J. Biol. Chem.">
        <title>A new first step in activation of steroid receptors: hormone-induced switching of FKBP51 and FKBP52 immunophilins.</title>
        <authorList>
            <person name="Davies T.H."/>
            <person name="Ning Y.M."/>
            <person name="Sanchez E.R."/>
        </authorList>
    </citation>
    <scope>FUNCTION IN INTRACELLULAR TRAFFICKING</scope>
    <scope>IDENTIFICATION IN A COMPLEX WITH HSP90AA1 AND NR3C1</scope>
    <scope>SUBCELLULAR LOCATION</scope>
    <scope>INTERACTION WITH DYNEIN</scope>
</reference>
<reference key="8">
    <citation type="submission" date="2007-07" db="UniProtKB">
        <authorList>
            <person name="Lubec G."/>
            <person name="Yang J.W."/>
            <person name="Zigmond M."/>
        </authorList>
    </citation>
    <scope>PROTEIN SEQUENCE OF 235-244</scope>
    <source>
        <tissue>Brain</tissue>
    </source>
</reference>
<reference key="9">
    <citation type="journal article" date="2010" name="Cell">
        <title>A tissue-specific atlas of mouse protein phosphorylation and expression.</title>
        <authorList>
            <person name="Huttlin E.L."/>
            <person name="Jedrychowski M.P."/>
            <person name="Elias J.E."/>
            <person name="Goswami T."/>
            <person name="Rad R."/>
            <person name="Beausoleil S.A."/>
            <person name="Villen J."/>
            <person name="Haas W."/>
            <person name="Sowa M.E."/>
            <person name="Gygi S.P."/>
        </authorList>
    </citation>
    <scope>IDENTIFICATION BY MASS SPECTROMETRY [LARGE SCALE ANALYSIS]</scope>
    <source>
        <tissue>Brain</tissue>
        <tissue>Brown adipose tissue</tissue>
        <tissue>Heart</tissue>
        <tissue>Kidney</tissue>
        <tissue>Liver</tissue>
        <tissue>Lung</tissue>
        <tissue>Pancreas</tissue>
        <tissue>Spleen</tissue>
        <tissue>Testis</tissue>
    </source>
</reference>
<reference key="10">
    <citation type="journal article" date="2014" name="Mol. Cell. Proteomics">
        <title>Immunoaffinity enrichment and mass spectrometry analysis of protein methylation.</title>
        <authorList>
            <person name="Guo A."/>
            <person name="Gu H."/>
            <person name="Zhou J."/>
            <person name="Mulhern D."/>
            <person name="Wang Y."/>
            <person name="Lee K.A."/>
            <person name="Yang V."/>
            <person name="Aguiar M."/>
            <person name="Kornhauser J."/>
            <person name="Jia X."/>
            <person name="Ren J."/>
            <person name="Beausoleil S.A."/>
            <person name="Silva J.C."/>
            <person name="Vemulapalli V."/>
            <person name="Bedford M.T."/>
            <person name="Comb M.J."/>
        </authorList>
    </citation>
    <scope>METHYLATION [LARGE SCALE ANALYSIS] AT ARG-373</scope>
    <scope>IDENTIFICATION BY MASS SPECTROMETRY [LARGE SCALE ANALYSIS]</scope>
    <source>
        <tissue>Brain</tissue>
    </source>
</reference>
<proteinExistence type="evidence at protein level"/>
<sequence length="458" mass="51572">MTAEEMKAAENGAQSAPLPLEGVDISPKQDEGVLKVIKREGTGTETPMIGDRVFVHYTGWLLDGTKFDSSLDRKDKFSFDLGKGEVIKAWDIAVATMKVGEVCHITCKPEYAYGAAGSPPKIPPNATLVFEVELFEFKGEDLTEEEDGGIIRRIRTRGEGYARPNDGAMVEVALEGYHKDRLFDQRELCFEVGEGESLDLPCGLEEAIQRMEKGEHSIVYLKPSYAFGSVGKERFQIPPHAELRYEVRLKSFEKAKESWEMSSAEKLEQSNIVKERGTAYFKEGKYKQALLQYKKIVSWLEYESSFSGEEMQKVHALRLASHLNLAMCHLKLQAFSAAIESCNKALELDSNNEKGLFRRGEAHLAVNDFDLARADFQKVLQLYPSNKAAKTQLAVCQQRTRRQLAREKKLYANMFERLAEEEHKVKAEVAAGDHPTDAEMKGERNNVAENQSRVETEA</sequence>
<accession>P30416</accession>
<accession>Q3TVC9</accession>
<organism>
    <name type="scientific">Mus musculus</name>
    <name type="common">Mouse</name>
    <dbReference type="NCBI Taxonomy" id="10090"/>
    <lineage>
        <taxon>Eukaryota</taxon>
        <taxon>Metazoa</taxon>
        <taxon>Chordata</taxon>
        <taxon>Craniata</taxon>
        <taxon>Vertebrata</taxon>
        <taxon>Euteleostomi</taxon>
        <taxon>Mammalia</taxon>
        <taxon>Eutheria</taxon>
        <taxon>Euarchontoglires</taxon>
        <taxon>Glires</taxon>
        <taxon>Rodentia</taxon>
        <taxon>Myomorpha</taxon>
        <taxon>Muroidea</taxon>
        <taxon>Muridae</taxon>
        <taxon>Murinae</taxon>
        <taxon>Mus</taxon>
        <taxon>Mus</taxon>
    </lineage>
</organism>
<keyword id="KW-0007">Acetylation</keyword>
<keyword id="KW-0143">Chaperone</keyword>
<keyword id="KW-0963">Cytoplasm</keyword>
<keyword id="KW-0206">Cytoskeleton</keyword>
<keyword id="KW-0903">Direct protein sequencing</keyword>
<keyword id="KW-0413">Isomerase</keyword>
<keyword id="KW-1017">Isopeptide bond</keyword>
<keyword id="KW-0488">Methylation</keyword>
<keyword id="KW-0493">Microtubule</keyword>
<keyword id="KW-0496">Mitochondrion</keyword>
<keyword id="KW-0539">Nucleus</keyword>
<keyword id="KW-0597">Phosphoprotein</keyword>
<keyword id="KW-1185">Reference proteome</keyword>
<keyword id="KW-0677">Repeat</keyword>
<keyword id="KW-0697">Rotamase</keyword>
<keyword id="KW-0802">TPR repeat</keyword>
<keyword id="KW-0832">Ubl conjugation</keyword>
<name>FKBP4_MOUSE</name>
<comment type="function">
    <text evidence="7 8 9">Immunophilin protein with PPIase and co-chaperone activities. Component of steroid receptors heterocomplexes through interaction with heat-shock protein 90 (HSP90). May play a role in the intracellular trafficking of heterooligomeric forms of steroid hormone receptors between cytoplasm and nuclear compartments. The isomerase activity controls neuronal growth cones via regulation of TRPC1 channel opening. Also acts as a regulator of microtubule dynamics by inhibiting MAPT/TAU ability to promote microtubule assembly. May have a protective role against oxidative stress in mitochondria.</text>
</comment>
<comment type="catalytic activity">
    <reaction>
        <text>[protein]-peptidylproline (omega=180) = [protein]-peptidylproline (omega=0)</text>
        <dbReference type="Rhea" id="RHEA:16237"/>
        <dbReference type="Rhea" id="RHEA-COMP:10747"/>
        <dbReference type="Rhea" id="RHEA-COMP:10748"/>
        <dbReference type="ChEBI" id="CHEBI:83833"/>
        <dbReference type="ChEBI" id="CHEBI:83834"/>
        <dbReference type="EC" id="5.2.1.8"/>
    </reaction>
</comment>
<comment type="activity regulation">
    <text evidence="1">Inhibited by FK506.</text>
</comment>
<comment type="subunit">
    <text evidence="1 3 4 7 8 10">Homodimer (By similarity). Interacts with GLMN (By similarity). Associates with HSP90AA1 and HSPA1A/HSPA1B in steroid hormone receptor complexes. Also interacts with peroxisomal phytanoyl-CoA alpha-hydroxylase (PHYH). Interacts with NR3C1 and dynein. Interacts with HSF1 in the HSP90 complex. Associates with tubulin. Interacts with MAPT/TAU (By similarity). Interacts (via TPR domain) with S100A1, S100A2 and S100A6; the interaction is Ca(2+) dependent. Interaction with S100A1 and S100A2 (but not with S100A6) leads to inhibition of FKBP4-HSP90 interaction. Interacts with dynein; contributes to NR3C1 transport to the nucleus.</text>
</comment>
<comment type="interaction">
    <interactant intactId="EBI-492746">
        <id>P30416</id>
    </interactant>
    <interactant intactId="EBI-492753">
        <id>P06537</id>
        <label>Nr3c1</label>
    </interactant>
    <organismsDiffer>false</organismsDiffer>
    <experiments>3</experiments>
</comment>
<comment type="subcellular location">
    <subcellularLocation>
        <location evidence="8">Cytoplasm</location>
        <location evidence="8">Cytosol</location>
    </subcellularLocation>
    <subcellularLocation>
        <location evidence="3">Mitochondrion</location>
    </subcellularLocation>
    <subcellularLocation>
        <location evidence="8 9">Nucleus</location>
    </subcellularLocation>
    <subcellularLocation>
        <location evidence="1">Cytoplasm</location>
        <location evidence="1">Cytoskeleton</location>
    </subcellularLocation>
    <text evidence="3 4">Shuttles from mitochondria to nucleus; co-localizes in mitochondria with the glucocorticoid receptor. Colocalized with MAPT/TAU in the distal part of the primary cortical neurons.</text>
</comment>
<comment type="domain">
    <text evidence="1">The PPIase activity is mainly due to the first PPIase FKBP-type domain (1-138 AA).</text>
</comment>
<comment type="domain">
    <text evidence="1">The C-terminal region (AA 375-458) is required to prevent tubulin polymerization.</text>
</comment>
<comment type="domain">
    <text evidence="1">The chaperone activity resides in the C-terminal region, mainly between amino acids 264 and 400.</text>
</comment>
<comment type="domain">
    <text evidence="1">The TPR repeats mediate mitochondrial localization.</text>
</comment>
<comment type="PTM">
    <text>Phosphorylation by CK2 results in loss of HSP90 binding activity.</text>
</comment>
<comment type="sequence caution" evidence="11">
    <conflict type="erroneous initiation">
        <sequence resource="EMBL-CDS" id="CAA34914"/>
    </conflict>
    <text>Truncated N-terminus.</text>
</comment>
<comment type="sequence caution" evidence="11">
    <conflict type="frameshift">
        <sequence resource="EMBL-CDS" id="CAA34914"/>
    </conflict>
</comment>
<gene>
    <name type="primary">Fkbp4</name>
    <name type="synonym">Fkpb52</name>
</gene>
<protein>
    <recommendedName>
        <fullName>Peptidyl-prolyl cis-trans isomerase FKBP4</fullName>
        <shortName>PPIase FKBP4</shortName>
        <ecNumber>5.2.1.8</ecNumber>
    </recommendedName>
    <alternativeName>
        <fullName>52 kDa FK506-binding protein</fullName>
        <shortName>52 kDa FKBP</shortName>
        <shortName>FKBP-52</shortName>
    </alternativeName>
    <alternativeName>
        <fullName>59 kDa immunophilin</fullName>
        <shortName>p59</shortName>
    </alternativeName>
    <alternativeName>
        <fullName>FK506-binding protein 4</fullName>
        <shortName>FKBP-4</shortName>
    </alternativeName>
    <alternativeName>
        <fullName>FKBP59</fullName>
    </alternativeName>
    <alternativeName>
        <fullName>HSP-binding immunophilin</fullName>
        <shortName>HBI</shortName>
    </alternativeName>
    <alternativeName>
        <fullName>Immunophilin FKBP52</fullName>
    </alternativeName>
    <alternativeName>
        <fullName>Rotamase</fullName>
    </alternativeName>
    <component>
        <recommendedName>
            <fullName>Peptidyl-prolyl cis-trans isomerase FKBP4, N-terminally processed</fullName>
        </recommendedName>
    </component>
</protein>
<feature type="chain" id="PRO_0000391469" description="Peptidyl-prolyl cis-trans isomerase FKBP4">
    <location>
        <begin position="1"/>
        <end position="458"/>
    </location>
</feature>
<feature type="initiator methionine" description="Removed; alternate" evidence="3">
    <location>
        <position position="1"/>
    </location>
</feature>
<feature type="chain" id="PRO_0000075319" description="Peptidyl-prolyl cis-trans isomerase FKBP4, N-terminally processed">
    <location>
        <begin position="2"/>
        <end position="458"/>
    </location>
</feature>
<feature type="domain" description="PPIase FKBP-type 1" evidence="5">
    <location>
        <begin position="50"/>
        <end position="138"/>
    </location>
</feature>
<feature type="domain" description="PPIase FKBP-type 2" evidence="5">
    <location>
        <begin position="167"/>
        <end position="253"/>
    </location>
</feature>
<feature type="repeat" description="TPR 1">
    <location>
        <begin position="270"/>
        <end position="303"/>
    </location>
</feature>
<feature type="repeat" description="TPR 2">
    <location>
        <begin position="319"/>
        <end position="352"/>
    </location>
</feature>
<feature type="repeat" description="TPR 3">
    <location>
        <begin position="353"/>
        <end position="386"/>
    </location>
</feature>
<feature type="region of interest" description="Disordered" evidence="6">
    <location>
        <begin position="1"/>
        <end position="24"/>
    </location>
</feature>
<feature type="region of interest" description="Interaction with tubulin" evidence="1">
    <location>
        <begin position="267"/>
        <end position="400"/>
    </location>
</feature>
<feature type="region of interest" description="Disordered" evidence="6">
    <location>
        <begin position="428"/>
        <end position="458"/>
    </location>
</feature>
<feature type="compositionally biased region" description="Basic and acidic residues" evidence="6">
    <location>
        <begin position="434"/>
        <end position="458"/>
    </location>
</feature>
<feature type="modified residue" description="N-acetylmethionine; in peptidyl-prolyl cis-trans isomerase FKBP4; alternate" evidence="3">
    <location>
        <position position="1"/>
    </location>
</feature>
<feature type="modified residue" description="N-acetylthreonine; in peptidyl-prolyl cis-trans isomerase FKBP4, N-terminally processed; partial" evidence="3">
    <location>
        <position position="2"/>
    </location>
</feature>
<feature type="modified residue" description="Phosphothreonine; by CK2" evidence="2">
    <location>
        <position position="143"/>
    </location>
</feature>
<feature type="modified residue" description="Phosphotyrosine" evidence="3">
    <location>
        <position position="220"/>
    </location>
</feature>
<feature type="modified residue" description="N6-acetyllysine" evidence="3">
    <location>
        <position position="282"/>
    </location>
</feature>
<feature type="modified residue" description="Omega-N-methylarginine" evidence="12">
    <location>
        <position position="373"/>
    </location>
</feature>
<feature type="modified residue" description="Phosphothreonine" evidence="3">
    <location>
        <position position="436"/>
    </location>
</feature>
<feature type="modified residue" description="Phosphoserine" evidence="3">
    <location>
        <position position="452"/>
    </location>
</feature>
<feature type="cross-link" description="Glycyl lysine isopeptide (Lys-Gly) (interchain with G-Cter in SUMO1)" evidence="3">
    <location>
        <position position="441"/>
    </location>
</feature>
<feature type="sequence conflict" description="In Ref. 4; CAC39452." evidence="11" ref="4">
    <original>MK</original>
    <variation>HE</variation>
    <location>
        <begin position="6"/>
        <end position="7"/>
    </location>
</feature>
<feature type="sequence conflict" description="In Ref. 4; CAC39452." evidence="11" ref="4">
    <original>TRGEGYAR</original>
    <variation>LGVKAMQG</variation>
    <location>
        <begin position="156"/>
        <end position="163"/>
    </location>
</feature>
<feature type="sequence conflict" description="In Ref. 4; CAC39452/CAA34914." evidence="11" ref="4">
    <original>GLEEAIQRMEKGEHSIVYLKPSYAFGSVGKERFQIPPH</original>
    <variation>AWRRPFSAWRKESIPSCTSNLAMLLAVWGRRGSRSHRT</variation>
    <location>
        <begin position="203"/>
        <end position="240"/>
    </location>
</feature>
<feature type="sequence conflict" description="In Ref. 4; CAC39452." evidence="11" ref="4">
    <original>EKLEQSNI</original>
    <variation>RSWSRATY</variation>
    <location>
        <begin position="265"/>
        <end position="272"/>
    </location>
</feature>
<feature type="sequence conflict" description="In Ref. 3; AAH03447." evidence="11" ref="3">
    <original>H</original>
    <variation>R</variation>
    <location>
        <position position="315"/>
    </location>
</feature>
<feature type="sequence conflict" description="In Ref. 2; BAE35690." evidence="11" ref="2">
    <original>G</original>
    <variation>R</variation>
    <location>
        <position position="360"/>
    </location>
</feature>
<dbReference type="EC" id="5.2.1.8"/>
<dbReference type="EMBL" id="X70887">
    <property type="protein sequence ID" value="CAA50231.1"/>
    <property type="molecule type" value="mRNA"/>
</dbReference>
<dbReference type="EMBL" id="AK083912">
    <property type="protein sequence ID" value="BAC39057.1"/>
    <property type="molecule type" value="mRNA"/>
</dbReference>
<dbReference type="EMBL" id="AK160202">
    <property type="protein sequence ID" value="BAE35690.1"/>
    <property type="molecule type" value="mRNA"/>
</dbReference>
<dbReference type="EMBL" id="BC003447">
    <property type="protein sequence ID" value="AAH03447.1"/>
    <property type="molecule type" value="mRNA"/>
</dbReference>
<dbReference type="EMBL" id="X17069">
    <property type="protein sequence ID" value="CAC39452.1"/>
    <property type="molecule type" value="mRNA"/>
</dbReference>
<dbReference type="EMBL" id="X17068">
    <property type="protein sequence ID" value="CAA34914.1"/>
    <property type="status" value="ALT_SEQ"/>
    <property type="molecule type" value="mRNA"/>
</dbReference>
<dbReference type="CCDS" id="CCDS20573.1"/>
<dbReference type="PIR" id="JN0873">
    <property type="entry name" value="JN0873"/>
</dbReference>
<dbReference type="RefSeq" id="NP_034349.1">
    <property type="nucleotide sequence ID" value="NM_010219.4"/>
</dbReference>
<dbReference type="SMR" id="P30416"/>
<dbReference type="BioGRID" id="199685">
    <property type="interactions" value="27"/>
</dbReference>
<dbReference type="FunCoup" id="P30416">
    <property type="interactions" value="2518"/>
</dbReference>
<dbReference type="IntAct" id="P30416">
    <property type="interactions" value="3"/>
</dbReference>
<dbReference type="MINT" id="P30416"/>
<dbReference type="STRING" id="10090.ENSMUSP00000032508"/>
<dbReference type="GlyGen" id="P30416">
    <property type="glycosylation" value="1 site, 1 O-linked glycan (1 site)"/>
</dbReference>
<dbReference type="iPTMnet" id="P30416"/>
<dbReference type="MetOSite" id="P30416"/>
<dbReference type="PhosphoSitePlus" id="P30416"/>
<dbReference type="SwissPalm" id="P30416"/>
<dbReference type="REPRODUCTION-2DPAGE" id="P30416"/>
<dbReference type="jPOST" id="P30416"/>
<dbReference type="PaxDb" id="10090-ENSMUSP00000032508"/>
<dbReference type="PeptideAtlas" id="P30416"/>
<dbReference type="ProteomicsDB" id="267592"/>
<dbReference type="Pumba" id="P30416"/>
<dbReference type="Antibodypedia" id="1205">
    <property type="antibodies" value="652 antibodies from 43 providers"/>
</dbReference>
<dbReference type="DNASU" id="14228"/>
<dbReference type="Ensembl" id="ENSMUST00000032508.11">
    <property type="protein sequence ID" value="ENSMUSP00000032508.5"/>
    <property type="gene ID" value="ENSMUSG00000030357.11"/>
</dbReference>
<dbReference type="GeneID" id="14228"/>
<dbReference type="KEGG" id="mmu:14228"/>
<dbReference type="UCSC" id="uc009edr.1">
    <property type="organism name" value="mouse"/>
</dbReference>
<dbReference type="AGR" id="MGI:95543"/>
<dbReference type="CTD" id="2288"/>
<dbReference type="MGI" id="MGI:95543">
    <property type="gene designation" value="Fkbp4"/>
</dbReference>
<dbReference type="VEuPathDB" id="HostDB:ENSMUSG00000030357"/>
<dbReference type="eggNOG" id="KOG0543">
    <property type="taxonomic scope" value="Eukaryota"/>
</dbReference>
<dbReference type="GeneTree" id="ENSGT00940000157200"/>
<dbReference type="InParanoid" id="P30416"/>
<dbReference type="OMA" id="FGAEGNE"/>
<dbReference type="OrthoDB" id="433738at2759"/>
<dbReference type="PhylomeDB" id="P30416"/>
<dbReference type="TreeFam" id="TF354214"/>
<dbReference type="Reactome" id="R-MMU-3371497">
    <property type="pathway name" value="HSP90 chaperone cycle for steroid hormone receptors (SHR) in the presence of ligand"/>
</dbReference>
<dbReference type="Reactome" id="R-MMU-3371568">
    <property type="pathway name" value="Attenuation phase"/>
</dbReference>
<dbReference type="Reactome" id="R-MMU-8939211">
    <property type="pathway name" value="ESR-mediated signaling"/>
</dbReference>
<dbReference type="Reactome" id="R-MMU-9018519">
    <property type="pathway name" value="Estrogen-dependent gene expression"/>
</dbReference>
<dbReference type="BioGRID-ORCS" id="14228">
    <property type="hits" value="0 hits in 80 CRISPR screens"/>
</dbReference>
<dbReference type="ChiTaRS" id="Fkbp4">
    <property type="organism name" value="mouse"/>
</dbReference>
<dbReference type="PRO" id="PR:P30416"/>
<dbReference type="Proteomes" id="UP000000589">
    <property type="component" value="Chromosome 6"/>
</dbReference>
<dbReference type="RNAct" id="P30416">
    <property type="molecule type" value="protein"/>
</dbReference>
<dbReference type="Bgee" id="ENSMUSG00000030357">
    <property type="expression patterns" value="Expressed in ileal epithelium and 268 other cell types or tissues"/>
</dbReference>
<dbReference type="ExpressionAtlas" id="P30416">
    <property type="expression patterns" value="baseline and differential"/>
</dbReference>
<dbReference type="GO" id="GO:0044295">
    <property type="term" value="C:axonal growth cone"/>
    <property type="evidence" value="ECO:0000250"/>
    <property type="project" value="UniProtKB"/>
</dbReference>
<dbReference type="GO" id="GO:0005829">
    <property type="term" value="C:cytosol"/>
    <property type="evidence" value="ECO:0000250"/>
    <property type="project" value="UniProtKB"/>
</dbReference>
<dbReference type="GO" id="GO:0005874">
    <property type="term" value="C:microtubule"/>
    <property type="evidence" value="ECO:0007669"/>
    <property type="project" value="UniProtKB-KW"/>
</dbReference>
<dbReference type="GO" id="GO:0005739">
    <property type="term" value="C:mitochondrion"/>
    <property type="evidence" value="ECO:0007669"/>
    <property type="project" value="UniProtKB-SubCell"/>
</dbReference>
<dbReference type="GO" id="GO:0043025">
    <property type="term" value="C:neuronal cell body"/>
    <property type="evidence" value="ECO:0007669"/>
    <property type="project" value="Ensembl"/>
</dbReference>
<dbReference type="GO" id="GO:0005654">
    <property type="term" value="C:nucleoplasm"/>
    <property type="evidence" value="ECO:0007669"/>
    <property type="project" value="Ensembl"/>
</dbReference>
<dbReference type="GO" id="GO:0005634">
    <property type="term" value="C:nucleus"/>
    <property type="evidence" value="ECO:0000314"/>
    <property type="project" value="MGI"/>
</dbReference>
<dbReference type="GO" id="GO:0048471">
    <property type="term" value="C:perinuclear region of cytoplasm"/>
    <property type="evidence" value="ECO:0007669"/>
    <property type="project" value="Ensembl"/>
</dbReference>
<dbReference type="GO" id="GO:0032991">
    <property type="term" value="C:protein-containing complex"/>
    <property type="evidence" value="ECO:0007669"/>
    <property type="project" value="Ensembl"/>
</dbReference>
<dbReference type="GO" id="GO:0005524">
    <property type="term" value="F:ATP binding"/>
    <property type="evidence" value="ECO:0000314"/>
    <property type="project" value="MGI"/>
</dbReference>
<dbReference type="GO" id="GO:0032767">
    <property type="term" value="F:copper-dependent protein binding"/>
    <property type="evidence" value="ECO:0007669"/>
    <property type="project" value="Ensembl"/>
</dbReference>
<dbReference type="GO" id="GO:0005525">
    <property type="term" value="F:GTP binding"/>
    <property type="evidence" value="ECO:0000314"/>
    <property type="project" value="MGI"/>
</dbReference>
<dbReference type="GO" id="GO:0031072">
    <property type="term" value="F:heat shock protein binding"/>
    <property type="evidence" value="ECO:0000314"/>
    <property type="project" value="MGI"/>
</dbReference>
<dbReference type="GO" id="GO:0035259">
    <property type="term" value="F:nuclear glucocorticoid receptor binding"/>
    <property type="evidence" value="ECO:0000314"/>
    <property type="project" value="MGI"/>
</dbReference>
<dbReference type="GO" id="GO:0003755">
    <property type="term" value="F:peptidyl-prolyl cis-trans isomerase activity"/>
    <property type="evidence" value="ECO:0000250"/>
    <property type="project" value="UniProtKB"/>
</dbReference>
<dbReference type="GO" id="GO:0051219">
    <property type="term" value="F:phosphoprotein binding"/>
    <property type="evidence" value="ECO:0000314"/>
    <property type="project" value="MGI"/>
</dbReference>
<dbReference type="GO" id="GO:0048156">
    <property type="term" value="F:tau protein binding"/>
    <property type="evidence" value="ECO:0007669"/>
    <property type="project" value="Ensembl"/>
</dbReference>
<dbReference type="GO" id="GO:0030521">
    <property type="term" value="P:androgen receptor signaling pathway"/>
    <property type="evidence" value="ECO:0000315"/>
    <property type="project" value="MGI"/>
</dbReference>
<dbReference type="GO" id="GO:0061077">
    <property type="term" value="P:chaperone-mediated protein folding"/>
    <property type="evidence" value="ECO:0000250"/>
    <property type="project" value="UniProtKB"/>
</dbReference>
<dbReference type="GO" id="GO:0006825">
    <property type="term" value="P:copper ion transport"/>
    <property type="evidence" value="ECO:0007669"/>
    <property type="project" value="Ensembl"/>
</dbReference>
<dbReference type="GO" id="GO:0007566">
    <property type="term" value="P:embryo implantation"/>
    <property type="evidence" value="ECO:0000315"/>
    <property type="project" value="MGI"/>
</dbReference>
<dbReference type="GO" id="GO:0046661">
    <property type="term" value="P:male sex differentiation"/>
    <property type="evidence" value="ECO:0000315"/>
    <property type="project" value="MGI"/>
</dbReference>
<dbReference type="GO" id="GO:0031115">
    <property type="term" value="P:negative regulation of microtubule polymerization"/>
    <property type="evidence" value="ECO:0007669"/>
    <property type="project" value="Ensembl"/>
</dbReference>
<dbReference type="GO" id="GO:0031111">
    <property type="term" value="P:negative regulation of microtubule polymerization or depolymerization"/>
    <property type="evidence" value="ECO:0000250"/>
    <property type="project" value="UniProtKB"/>
</dbReference>
<dbReference type="GO" id="GO:0010977">
    <property type="term" value="P:negative regulation of neuron projection development"/>
    <property type="evidence" value="ECO:0000250"/>
    <property type="project" value="UniProtKB"/>
</dbReference>
<dbReference type="GO" id="GO:0030850">
    <property type="term" value="P:prostate gland development"/>
    <property type="evidence" value="ECO:0000315"/>
    <property type="project" value="MGI"/>
</dbReference>
<dbReference type="GO" id="GO:0031503">
    <property type="term" value="P:protein-containing complex localization"/>
    <property type="evidence" value="ECO:0000314"/>
    <property type="project" value="MGI"/>
</dbReference>
<dbReference type="GO" id="GO:0048608">
    <property type="term" value="P:reproductive structure development"/>
    <property type="evidence" value="ECO:0000315"/>
    <property type="project" value="MGI"/>
</dbReference>
<dbReference type="GO" id="GO:0006463">
    <property type="term" value="P:steroid hormone receptor complex assembly"/>
    <property type="evidence" value="ECO:0000314"/>
    <property type="project" value="MGI"/>
</dbReference>
<dbReference type="FunFam" id="1.25.40.10:FF:000008">
    <property type="entry name" value="Peptidylprolyl isomerase"/>
    <property type="match status" value="1"/>
</dbReference>
<dbReference type="FunFam" id="3.10.50.40:FF:000011">
    <property type="entry name" value="Peptidylprolyl isomerase"/>
    <property type="match status" value="1"/>
</dbReference>
<dbReference type="FunFam" id="3.10.50.40:FF:000013">
    <property type="entry name" value="Peptidylprolyl isomerase"/>
    <property type="match status" value="1"/>
</dbReference>
<dbReference type="Gene3D" id="3.10.50.40">
    <property type="match status" value="2"/>
</dbReference>
<dbReference type="Gene3D" id="1.25.40.10">
    <property type="entry name" value="Tetratricopeptide repeat domain"/>
    <property type="match status" value="1"/>
</dbReference>
<dbReference type="InterPro" id="IPR050754">
    <property type="entry name" value="FKBP4/5/8-like"/>
</dbReference>
<dbReference type="InterPro" id="IPR046357">
    <property type="entry name" value="PPIase_dom_sf"/>
</dbReference>
<dbReference type="InterPro" id="IPR001179">
    <property type="entry name" value="PPIase_FKBP_dom"/>
</dbReference>
<dbReference type="InterPro" id="IPR011990">
    <property type="entry name" value="TPR-like_helical_dom_sf"/>
</dbReference>
<dbReference type="InterPro" id="IPR013105">
    <property type="entry name" value="TPR_2"/>
</dbReference>
<dbReference type="InterPro" id="IPR019734">
    <property type="entry name" value="TPR_rpt"/>
</dbReference>
<dbReference type="PANTHER" id="PTHR46512">
    <property type="entry name" value="PEPTIDYLPROLYL ISOMERASE"/>
    <property type="match status" value="1"/>
</dbReference>
<dbReference type="PANTHER" id="PTHR46512:SF9">
    <property type="entry name" value="PEPTIDYLPROLYL ISOMERASE"/>
    <property type="match status" value="1"/>
</dbReference>
<dbReference type="Pfam" id="PF00254">
    <property type="entry name" value="FKBP_C"/>
    <property type="match status" value="2"/>
</dbReference>
<dbReference type="Pfam" id="PF00515">
    <property type="entry name" value="TPR_1"/>
    <property type="match status" value="1"/>
</dbReference>
<dbReference type="Pfam" id="PF07719">
    <property type="entry name" value="TPR_2"/>
    <property type="match status" value="1"/>
</dbReference>
<dbReference type="SMART" id="SM00028">
    <property type="entry name" value="TPR"/>
    <property type="match status" value="3"/>
</dbReference>
<dbReference type="SUPFAM" id="SSF54534">
    <property type="entry name" value="FKBP-like"/>
    <property type="match status" value="2"/>
</dbReference>
<dbReference type="SUPFAM" id="SSF48452">
    <property type="entry name" value="TPR-like"/>
    <property type="match status" value="1"/>
</dbReference>
<dbReference type="PROSITE" id="PS50059">
    <property type="entry name" value="FKBP_PPIASE"/>
    <property type="match status" value="2"/>
</dbReference>
<dbReference type="PROSITE" id="PS50005">
    <property type="entry name" value="TPR"/>
    <property type="match status" value="3"/>
</dbReference>
<dbReference type="PROSITE" id="PS50293">
    <property type="entry name" value="TPR_REGION"/>
    <property type="match status" value="2"/>
</dbReference>
<evidence type="ECO:0000250" key="1"/>
<evidence type="ECO:0000250" key="2">
    <source>
        <dbReference type="UniProtKB" id="P27124"/>
    </source>
</evidence>
<evidence type="ECO:0000250" key="3">
    <source>
        <dbReference type="UniProtKB" id="Q02790"/>
    </source>
</evidence>
<evidence type="ECO:0000250" key="4">
    <source>
        <dbReference type="UniProtKB" id="Q9QVC8"/>
    </source>
</evidence>
<evidence type="ECO:0000255" key="5">
    <source>
        <dbReference type="PROSITE-ProRule" id="PRU00277"/>
    </source>
</evidence>
<evidence type="ECO:0000256" key="6">
    <source>
        <dbReference type="SAM" id="MobiDB-lite"/>
    </source>
</evidence>
<evidence type="ECO:0000269" key="7">
    <source>
    </source>
</evidence>
<evidence type="ECO:0000269" key="8">
    <source>
    </source>
</evidence>
<evidence type="ECO:0000269" key="9">
    <source>
    </source>
</evidence>
<evidence type="ECO:0000269" key="10">
    <source>
    </source>
</evidence>
<evidence type="ECO:0000305" key="11"/>
<evidence type="ECO:0007744" key="12">
    <source>
    </source>
</evidence>